<protein>
    <recommendedName>
        <fullName evidence="1">Ribose-5-phosphate isomerase A</fullName>
        <ecNumber evidence="1">5.3.1.6</ecNumber>
    </recommendedName>
    <alternativeName>
        <fullName evidence="1">Phosphoriboisomerase A</fullName>
        <shortName evidence="1">PRI</shortName>
    </alternativeName>
</protein>
<comment type="function">
    <text evidence="1">Catalyzes the reversible conversion of ribose-5-phosphate to ribulose 5-phosphate.</text>
</comment>
<comment type="catalytic activity">
    <reaction evidence="1">
        <text>aldehydo-D-ribose 5-phosphate = D-ribulose 5-phosphate</text>
        <dbReference type="Rhea" id="RHEA:14657"/>
        <dbReference type="ChEBI" id="CHEBI:58121"/>
        <dbReference type="ChEBI" id="CHEBI:58273"/>
        <dbReference type="EC" id="5.3.1.6"/>
    </reaction>
</comment>
<comment type="pathway">
    <text evidence="1">Carbohydrate degradation; pentose phosphate pathway; D-ribose 5-phosphate from D-ribulose 5-phosphate (non-oxidative stage): step 1/1.</text>
</comment>
<comment type="subunit">
    <text evidence="1">Homodimer.</text>
</comment>
<comment type="similarity">
    <text evidence="1">Belongs to the ribose 5-phosphate isomerase family.</text>
</comment>
<proteinExistence type="inferred from homology"/>
<dbReference type="EC" id="5.3.1.6" evidence="1"/>
<dbReference type="EMBL" id="AM421808">
    <property type="protein sequence ID" value="CAM10647.1"/>
    <property type="molecule type" value="Genomic_DNA"/>
</dbReference>
<dbReference type="RefSeq" id="WP_002212883.1">
    <property type="nucleotide sequence ID" value="NC_008767.1"/>
</dbReference>
<dbReference type="SMR" id="A1KUU8"/>
<dbReference type="KEGG" id="nmc:NMC1440"/>
<dbReference type="HOGENOM" id="CLU_056590_1_1_4"/>
<dbReference type="UniPathway" id="UPA00115">
    <property type="reaction ID" value="UER00412"/>
</dbReference>
<dbReference type="Proteomes" id="UP000002286">
    <property type="component" value="Chromosome"/>
</dbReference>
<dbReference type="GO" id="GO:0005829">
    <property type="term" value="C:cytosol"/>
    <property type="evidence" value="ECO:0007669"/>
    <property type="project" value="TreeGrafter"/>
</dbReference>
<dbReference type="GO" id="GO:0004751">
    <property type="term" value="F:ribose-5-phosphate isomerase activity"/>
    <property type="evidence" value="ECO:0007669"/>
    <property type="project" value="UniProtKB-UniRule"/>
</dbReference>
<dbReference type="GO" id="GO:0006014">
    <property type="term" value="P:D-ribose metabolic process"/>
    <property type="evidence" value="ECO:0007669"/>
    <property type="project" value="TreeGrafter"/>
</dbReference>
<dbReference type="GO" id="GO:0009052">
    <property type="term" value="P:pentose-phosphate shunt, non-oxidative branch"/>
    <property type="evidence" value="ECO:0007669"/>
    <property type="project" value="UniProtKB-UniRule"/>
</dbReference>
<dbReference type="CDD" id="cd01398">
    <property type="entry name" value="RPI_A"/>
    <property type="match status" value="1"/>
</dbReference>
<dbReference type="FunFam" id="3.40.50.1360:FF:000001">
    <property type="entry name" value="Ribose-5-phosphate isomerase A"/>
    <property type="match status" value="1"/>
</dbReference>
<dbReference type="Gene3D" id="3.30.70.260">
    <property type="match status" value="1"/>
</dbReference>
<dbReference type="Gene3D" id="3.40.50.1360">
    <property type="match status" value="1"/>
</dbReference>
<dbReference type="HAMAP" id="MF_00170">
    <property type="entry name" value="Rib_5P_isom_A"/>
    <property type="match status" value="1"/>
</dbReference>
<dbReference type="InterPro" id="IPR037171">
    <property type="entry name" value="NagB/RpiA_transferase-like"/>
</dbReference>
<dbReference type="InterPro" id="IPR020672">
    <property type="entry name" value="Ribose5P_isomerase_typA_subgr"/>
</dbReference>
<dbReference type="InterPro" id="IPR004788">
    <property type="entry name" value="Ribose5P_isomerase_type_A"/>
</dbReference>
<dbReference type="NCBIfam" id="NF001924">
    <property type="entry name" value="PRK00702.1"/>
    <property type="match status" value="1"/>
</dbReference>
<dbReference type="NCBIfam" id="TIGR00021">
    <property type="entry name" value="rpiA"/>
    <property type="match status" value="1"/>
</dbReference>
<dbReference type="PANTHER" id="PTHR11934">
    <property type="entry name" value="RIBOSE-5-PHOSPHATE ISOMERASE"/>
    <property type="match status" value="1"/>
</dbReference>
<dbReference type="PANTHER" id="PTHR11934:SF0">
    <property type="entry name" value="RIBOSE-5-PHOSPHATE ISOMERASE"/>
    <property type="match status" value="1"/>
</dbReference>
<dbReference type="Pfam" id="PF06026">
    <property type="entry name" value="Rib_5-P_isom_A"/>
    <property type="match status" value="1"/>
</dbReference>
<dbReference type="SUPFAM" id="SSF75445">
    <property type="entry name" value="D-ribose-5-phosphate isomerase (RpiA), lid domain"/>
    <property type="match status" value="1"/>
</dbReference>
<dbReference type="SUPFAM" id="SSF100950">
    <property type="entry name" value="NagB/RpiA/CoA transferase-like"/>
    <property type="match status" value="1"/>
</dbReference>
<evidence type="ECO:0000255" key="1">
    <source>
        <dbReference type="HAMAP-Rule" id="MF_00170"/>
    </source>
</evidence>
<sequence>MTTQDELKRIAAEKAVEFVPENEYIGIGTGSTINFFIEALGKSGKKIKGAVSTSKKSSELLAQYDIPVVSLNEVSGLAVYIDGADEVNHALQMIKGGGGAHLNEKIVASASEKFVCIADESKYVSRLGKFPLPVEVVESARSLVSRKLLAMGGQPELRIGYTTFYGNQIVDVHGLNIDKPLMMEDEINKITGVLENGIFARDAADVLILGTEEGAKVIYPCQG</sequence>
<organism>
    <name type="scientific">Neisseria meningitidis serogroup C / serotype 2a (strain ATCC 700532 / DSM 15464 / FAM18)</name>
    <dbReference type="NCBI Taxonomy" id="272831"/>
    <lineage>
        <taxon>Bacteria</taxon>
        <taxon>Pseudomonadati</taxon>
        <taxon>Pseudomonadota</taxon>
        <taxon>Betaproteobacteria</taxon>
        <taxon>Neisseriales</taxon>
        <taxon>Neisseriaceae</taxon>
        <taxon>Neisseria</taxon>
    </lineage>
</organism>
<gene>
    <name evidence="1" type="primary">rpiA</name>
    <name type="ordered locus">NMC1440</name>
</gene>
<accession>A1KUU8</accession>
<feature type="chain" id="PRO_1000016952" description="Ribose-5-phosphate isomerase A">
    <location>
        <begin position="1"/>
        <end position="223"/>
    </location>
</feature>
<feature type="active site" description="Proton acceptor" evidence="1">
    <location>
        <position position="104"/>
    </location>
</feature>
<feature type="binding site" evidence="1">
    <location>
        <begin position="29"/>
        <end position="32"/>
    </location>
    <ligand>
        <name>substrate</name>
    </ligand>
</feature>
<feature type="binding site" evidence="1">
    <location>
        <begin position="82"/>
        <end position="85"/>
    </location>
    <ligand>
        <name>substrate</name>
    </ligand>
</feature>
<feature type="binding site" evidence="1">
    <location>
        <begin position="95"/>
        <end position="98"/>
    </location>
    <ligand>
        <name>substrate</name>
    </ligand>
</feature>
<feature type="binding site" evidence="1">
    <location>
        <position position="122"/>
    </location>
    <ligand>
        <name>substrate</name>
    </ligand>
</feature>
<keyword id="KW-0413">Isomerase</keyword>
<name>RPIA_NEIMF</name>
<reference key="1">
    <citation type="journal article" date="2007" name="PLoS Genet.">
        <title>Meningococcal genetic variation mechanisms viewed through comparative analysis of serogroup C strain FAM18.</title>
        <authorList>
            <person name="Bentley S.D."/>
            <person name="Vernikos G.S."/>
            <person name="Snyder L.A.S."/>
            <person name="Churcher C."/>
            <person name="Arrowsmith C."/>
            <person name="Chillingworth T."/>
            <person name="Cronin A."/>
            <person name="Davis P.H."/>
            <person name="Holroyd N.E."/>
            <person name="Jagels K."/>
            <person name="Maddison M."/>
            <person name="Moule S."/>
            <person name="Rabbinowitsch E."/>
            <person name="Sharp S."/>
            <person name="Unwin L."/>
            <person name="Whitehead S."/>
            <person name="Quail M.A."/>
            <person name="Achtman M."/>
            <person name="Barrell B.G."/>
            <person name="Saunders N.J."/>
            <person name="Parkhill J."/>
        </authorList>
    </citation>
    <scope>NUCLEOTIDE SEQUENCE [LARGE SCALE GENOMIC DNA]</scope>
    <source>
        <strain>ATCC 700532 / DSM 15464 / FAM18</strain>
    </source>
</reference>